<proteinExistence type="evidence at protein level"/>
<comment type="function">
    <text evidence="12 13 14">Non-reducing polyketide synthase; part of the gene cluster that mediates the biosynthesis of azaphilone pigments (MonAzPs), a complex mixture of compounds with a common azaphilone skeleton very widely used as food colorants (PubMed:26946170, PubMed:28959415, PubMed:34220766). PigA catalyzes the first step of MonAzPs biosynthesis and forms the hexaketide precursor from successive condensations of five malonyl-CoA units, with a simple acetyl-CoA starter unit (PubMed:28959415). The starter acyl transferase (SAT) domain of pigA selects an acetyl-CoA starter unit, and the ketoacyl synthase (KS)-acyl transferase (AT)-acyl carrier protein (ACP) domains extend this starter unit five times with malonyl-CoA in five successive decarboxylative Claisen condensation cycles. The methyltransferase (MT) domain conducts a single C-methylation at C-4, most likely at the pentaketide stage. The reactive hexaketide chain then undergoes a product template (PT) domain-mediated C-2 to C-7 aldol cyclization to afford the first aromatic ring, followed by reductive release of the first pathway intermediate by the NADPH-dependent reductive release (R) domain (PubMed:26946170, PubMed:28959415). The role of esterase pigG is not clear, but it may play at most a supplementary role in the formation of the benzaldehyde produced by the pigA nrPKS. This very reactive benzaldehyde is intercepted by the pigC ketoreductase that to provide the first stable enzyme-free MonAzPs intermediate, 6-(4-hydroxy-2-oxopentyl)-3-methyl-2,4-dioxocyclohexane carbaldehyde, also known as M7PKS-1. The FAD-dependent monooxygenase pigN hydroxylates M7PKS-1 at C-4, which triggers the formation of the pyran ring. PigJ, pigK and pigD are involved in the acetylation of the pyran ring. PigJ and pigK form the two subunits of a dedicated fungal FAS that produces the side chain fatty acyl moiety of MonAzPs and pigD transfers the fatty acyl chain to the C-4 alcohol. PigM and pigO are involved in the elimination of the omega-1 alcohol. PigM acts as an O-acetyltransferase that synthesizes the putative O-11 acetyl intermediate whereas pigO eliminates acetic acid to yield an intermediate with a C10(11) double bond. The dehydration of the C-11 alcohol followed by the reduction of the C6(7) double bond by the NAD(P)H-dependent oxidoreductase pigE increases the electrophilicity of the C-5 ketone of the resulting acyl benzopyran. This in turn sets up the C-5 ketone for an intramolecular Knoevenagel aldol condensation with the C-20 enol of the side chain. This condensation affords the characteristic linear tricyclic carbon skeletons of the yellow pigments that serve as the common precursors for the classical yellow pigments monascin and ankaflavin, orange pigments rubopunctatin and monascorubrin, and red pigments ribropunctamine and monascorubramine. The FAD-dependent oxidoreductase pigF is especially invoved in the biosynthesis of orange and red pigments via desaturation of C6(7) (PubMed:28959415).</text>
</comment>
<comment type="cofactor">
    <cofactor evidence="3">
        <name>pantetheine 4'-phosphate</name>
        <dbReference type="ChEBI" id="CHEBI:47942"/>
    </cofactor>
</comment>
<comment type="pathway">
    <text evidence="12 13 14">Secondary metabolite biosynthesis.</text>
</comment>
<comment type="induction">
    <text evidence="14 15">Expression is positively regulated by the transcription factor sir2 (PubMed:35802237). Expression is also positively regulated by the azaphilone pigments (MonAzPs) gene cluster-specific transcription regulator pigB (PubMed:34220766).</text>
</comment>
<comment type="domain">
    <text evidence="18">Multidomain protein; including a starter unit:ACP transacylase (SAT) that selects the starter unit; a ketosynthase (KS) that catalyzes repeated decarboxylative condensation to elongate the polyketide backbone; a malonyl-CoA:ACP transacylase (MAT) that selects and transfers the extender unit malonyl-CoA; a product template (PT) domain that controls the immediate cyclization regioselectivity of the reactive polyketide backbone; and an acyl-carrier protein (ACP) that serves as the tether of the growing and completed polyketide via its phosphopantetheinyl arm.</text>
</comment>
<comment type="disruption phenotype">
    <text evidence="12 13 14">Completely abolishes the production of all azaphilone pigment (MonAzPs)-related substances.</text>
</comment>
<comment type="biotechnology">
    <text evidence="7 8 9 10 11 16">As colorants, MonAzPs are widely used in various food products for centuries (PubMed:37087240). Moreover, MonAzPs also possess wide-ranging biological activities such as antibacterial activity, preventing hypertension, lowering cholesterol levels, causing hypolipidemic effects, and displaying antiobesity and antitumor activities (PubMed:16283302, PubMed:16660141, PubMed:17191930, PubMed:20666456, PubMed:22562164).</text>
</comment>
<gene>
    <name evidence="17" type="primary">pigA</name>
</gene>
<dbReference type="EC" id="2.3.1.-" evidence="13"/>
<dbReference type="EMBL" id="KT862835">
    <property type="protein sequence ID" value="ALN44200.1"/>
    <property type="molecule type" value="mRNA"/>
</dbReference>
<dbReference type="SMR" id="A0A0S2CHA9"/>
<dbReference type="GO" id="GO:0003985">
    <property type="term" value="F:acetyl-CoA C-acetyltransferase activity"/>
    <property type="evidence" value="ECO:0007669"/>
    <property type="project" value="UniProtKB-EC"/>
</dbReference>
<dbReference type="GO" id="GO:0008168">
    <property type="term" value="F:methyltransferase activity"/>
    <property type="evidence" value="ECO:0007669"/>
    <property type="project" value="UniProtKB-KW"/>
</dbReference>
<dbReference type="GO" id="GO:0031177">
    <property type="term" value="F:phosphopantetheine binding"/>
    <property type="evidence" value="ECO:0007669"/>
    <property type="project" value="InterPro"/>
</dbReference>
<dbReference type="GO" id="GO:0031409">
    <property type="term" value="F:pigment binding"/>
    <property type="evidence" value="ECO:0007669"/>
    <property type="project" value="UniProtKB-KW"/>
</dbReference>
<dbReference type="GO" id="GO:0009058">
    <property type="term" value="P:biosynthetic process"/>
    <property type="evidence" value="ECO:0007669"/>
    <property type="project" value="UniProtKB-ARBA"/>
</dbReference>
<dbReference type="GO" id="GO:0032259">
    <property type="term" value="P:methylation"/>
    <property type="evidence" value="ECO:0007669"/>
    <property type="project" value="UniProtKB-KW"/>
</dbReference>
<dbReference type="CDD" id="cd00833">
    <property type="entry name" value="PKS"/>
    <property type="match status" value="1"/>
</dbReference>
<dbReference type="Gene3D" id="3.30.70.3290">
    <property type="match status" value="1"/>
</dbReference>
<dbReference type="Gene3D" id="3.40.47.10">
    <property type="match status" value="1"/>
</dbReference>
<dbReference type="Gene3D" id="1.10.1200.10">
    <property type="entry name" value="ACP-like"/>
    <property type="match status" value="2"/>
</dbReference>
<dbReference type="Gene3D" id="3.40.366.10">
    <property type="entry name" value="Malonyl-Coenzyme A Acyl Carrier Protein, domain 2"/>
    <property type="match status" value="2"/>
</dbReference>
<dbReference type="Gene3D" id="3.40.50.720">
    <property type="entry name" value="NAD(P)-binding Rossmann-like Domain"/>
    <property type="match status" value="1"/>
</dbReference>
<dbReference type="Gene3D" id="3.10.129.110">
    <property type="entry name" value="Polyketide synthase dehydratase"/>
    <property type="match status" value="1"/>
</dbReference>
<dbReference type="Gene3D" id="3.40.50.150">
    <property type="entry name" value="Vaccinia Virus protein VP39"/>
    <property type="match status" value="1"/>
</dbReference>
<dbReference type="InterPro" id="IPR001227">
    <property type="entry name" value="Ac_transferase_dom_sf"/>
</dbReference>
<dbReference type="InterPro" id="IPR036736">
    <property type="entry name" value="ACP-like_sf"/>
</dbReference>
<dbReference type="InterPro" id="IPR014043">
    <property type="entry name" value="Acyl_transferase_dom"/>
</dbReference>
<dbReference type="InterPro" id="IPR016035">
    <property type="entry name" value="Acyl_Trfase/lysoPLipase"/>
</dbReference>
<dbReference type="InterPro" id="IPR013120">
    <property type="entry name" value="Far_NAD-bd"/>
</dbReference>
<dbReference type="InterPro" id="IPR014031">
    <property type="entry name" value="Ketoacyl_synth_C"/>
</dbReference>
<dbReference type="InterPro" id="IPR014030">
    <property type="entry name" value="Ketoacyl_synth_N"/>
</dbReference>
<dbReference type="InterPro" id="IPR016036">
    <property type="entry name" value="Malonyl_transacylase_ACP-bd"/>
</dbReference>
<dbReference type="InterPro" id="IPR013217">
    <property type="entry name" value="Methyltransf_12"/>
</dbReference>
<dbReference type="InterPro" id="IPR036291">
    <property type="entry name" value="NAD(P)-bd_dom_sf"/>
</dbReference>
<dbReference type="InterPro" id="IPR020841">
    <property type="entry name" value="PKS_Beta-ketoAc_synthase_dom"/>
</dbReference>
<dbReference type="InterPro" id="IPR042104">
    <property type="entry name" value="PKS_dehydratase_sf"/>
</dbReference>
<dbReference type="InterPro" id="IPR049900">
    <property type="entry name" value="PKS_mFAS_DH"/>
</dbReference>
<dbReference type="InterPro" id="IPR020806">
    <property type="entry name" value="PKS_PP-bd"/>
</dbReference>
<dbReference type="InterPro" id="IPR050444">
    <property type="entry name" value="Polyketide_Synthase"/>
</dbReference>
<dbReference type="InterPro" id="IPR009081">
    <property type="entry name" value="PP-bd_ACP"/>
</dbReference>
<dbReference type="InterPro" id="IPR006162">
    <property type="entry name" value="Ppantetheine_attach_site"/>
</dbReference>
<dbReference type="InterPro" id="IPR029063">
    <property type="entry name" value="SAM-dependent_MTases_sf"/>
</dbReference>
<dbReference type="InterPro" id="IPR032088">
    <property type="entry name" value="SAT"/>
</dbReference>
<dbReference type="InterPro" id="IPR016039">
    <property type="entry name" value="Thiolase-like"/>
</dbReference>
<dbReference type="PANTHER" id="PTHR45681:SF6">
    <property type="entry name" value="POLYKETIDE SYNTHASE 37"/>
    <property type="match status" value="1"/>
</dbReference>
<dbReference type="PANTHER" id="PTHR45681">
    <property type="entry name" value="POLYKETIDE SYNTHASE 44-RELATED"/>
    <property type="match status" value="1"/>
</dbReference>
<dbReference type="Pfam" id="PF00698">
    <property type="entry name" value="Acyl_transf_1"/>
    <property type="match status" value="1"/>
</dbReference>
<dbReference type="Pfam" id="PF18558">
    <property type="entry name" value="HTH_51"/>
    <property type="match status" value="1"/>
</dbReference>
<dbReference type="Pfam" id="PF00109">
    <property type="entry name" value="ketoacyl-synt"/>
    <property type="match status" value="1"/>
</dbReference>
<dbReference type="Pfam" id="PF02801">
    <property type="entry name" value="Ketoacyl-synt_C"/>
    <property type="match status" value="1"/>
</dbReference>
<dbReference type="Pfam" id="PF08242">
    <property type="entry name" value="Methyltransf_12"/>
    <property type="match status" value="1"/>
</dbReference>
<dbReference type="Pfam" id="PF07993">
    <property type="entry name" value="NAD_binding_4"/>
    <property type="match status" value="1"/>
</dbReference>
<dbReference type="Pfam" id="PF00550">
    <property type="entry name" value="PP-binding"/>
    <property type="match status" value="2"/>
</dbReference>
<dbReference type="Pfam" id="PF16073">
    <property type="entry name" value="SAT"/>
    <property type="match status" value="1"/>
</dbReference>
<dbReference type="SMART" id="SM00827">
    <property type="entry name" value="PKS_AT"/>
    <property type="match status" value="1"/>
</dbReference>
<dbReference type="SMART" id="SM00825">
    <property type="entry name" value="PKS_KS"/>
    <property type="match status" value="1"/>
</dbReference>
<dbReference type="SMART" id="SM00823">
    <property type="entry name" value="PKS_PP"/>
    <property type="match status" value="2"/>
</dbReference>
<dbReference type="SMART" id="SM01294">
    <property type="entry name" value="PKS_PP_betabranch"/>
    <property type="match status" value="1"/>
</dbReference>
<dbReference type="SUPFAM" id="SSF47336">
    <property type="entry name" value="ACP-like"/>
    <property type="match status" value="2"/>
</dbReference>
<dbReference type="SUPFAM" id="SSF52151">
    <property type="entry name" value="FabD/lysophospholipase-like"/>
    <property type="match status" value="1"/>
</dbReference>
<dbReference type="SUPFAM" id="SSF51735">
    <property type="entry name" value="NAD(P)-binding Rossmann-fold domains"/>
    <property type="match status" value="1"/>
</dbReference>
<dbReference type="SUPFAM" id="SSF55048">
    <property type="entry name" value="Probable ACP-binding domain of malonyl-CoA ACP transacylase"/>
    <property type="match status" value="1"/>
</dbReference>
<dbReference type="SUPFAM" id="SSF53335">
    <property type="entry name" value="S-adenosyl-L-methionine-dependent methyltransferases"/>
    <property type="match status" value="1"/>
</dbReference>
<dbReference type="SUPFAM" id="SSF53901">
    <property type="entry name" value="Thiolase-like"/>
    <property type="match status" value="1"/>
</dbReference>
<dbReference type="PROSITE" id="PS50075">
    <property type="entry name" value="CARRIER"/>
    <property type="match status" value="2"/>
</dbReference>
<dbReference type="PROSITE" id="PS52004">
    <property type="entry name" value="KS3_2"/>
    <property type="match status" value="1"/>
</dbReference>
<dbReference type="PROSITE" id="PS00012">
    <property type="entry name" value="PHOSPHOPANTETHEINE"/>
    <property type="match status" value="1"/>
</dbReference>
<dbReference type="PROSITE" id="PS52019">
    <property type="entry name" value="PKS_MFAS_DH"/>
    <property type="match status" value="1"/>
</dbReference>
<dbReference type="PROSITE" id="PS00098">
    <property type="entry name" value="THIOLASE_1"/>
    <property type="match status" value="1"/>
</dbReference>
<evidence type="ECO:0000250" key="1">
    <source>
        <dbReference type="UniProtKB" id="A0A0K0MCJ4"/>
    </source>
</evidence>
<evidence type="ECO:0000255" key="2"/>
<evidence type="ECO:0000255" key="3">
    <source>
        <dbReference type="PROSITE-ProRule" id="PRU00258"/>
    </source>
</evidence>
<evidence type="ECO:0000255" key="4">
    <source>
        <dbReference type="PROSITE-ProRule" id="PRU01348"/>
    </source>
</evidence>
<evidence type="ECO:0000255" key="5">
    <source>
        <dbReference type="PROSITE-ProRule" id="PRU01363"/>
    </source>
</evidence>
<evidence type="ECO:0000256" key="6">
    <source>
        <dbReference type="SAM" id="MobiDB-lite"/>
    </source>
</evidence>
<evidence type="ECO:0000269" key="7">
    <source>
    </source>
</evidence>
<evidence type="ECO:0000269" key="8">
    <source>
    </source>
</evidence>
<evidence type="ECO:0000269" key="9">
    <source>
    </source>
</evidence>
<evidence type="ECO:0000269" key="10">
    <source>
    </source>
</evidence>
<evidence type="ECO:0000269" key="11">
    <source>
    </source>
</evidence>
<evidence type="ECO:0000269" key="12">
    <source>
    </source>
</evidence>
<evidence type="ECO:0000269" key="13">
    <source>
    </source>
</evidence>
<evidence type="ECO:0000269" key="14">
    <source>
    </source>
</evidence>
<evidence type="ECO:0000269" key="15">
    <source>
    </source>
</evidence>
<evidence type="ECO:0000269" key="16">
    <source>
    </source>
</evidence>
<evidence type="ECO:0000303" key="17">
    <source>
    </source>
</evidence>
<evidence type="ECO:0000305" key="18">
    <source>
    </source>
</evidence>
<reference key="1">
    <citation type="submission" date="2015-09" db="EMBL/GenBank/DDBJ databases">
        <authorList>
            <person name="Jackson K.R."/>
            <person name="Lunt B.L."/>
            <person name="Fisher J.N.B."/>
            <person name="Gardner A.V."/>
            <person name="Bailey M.E."/>
            <person name="Deus L.M."/>
            <person name="Earl A.S."/>
            <person name="Gibby P.D."/>
            <person name="Hartmann K.A."/>
            <person name="Liu J.E."/>
            <person name="Manci A.M."/>
            <person name="Nielsen D.A."/>
            <person name="Solomon M.B."/>
            <person name="Breakwell D.P."/>
            <person name="Burnett S.H."/>
            <person name="Grose J.H."/>
        </authorList>
    </citation>
    <scope>NUCLEOTIDE SEQUENCE [MRNA]</scope>
    <source>
        <strain>M7</strain>
    </source>
</reference>
<reference key="2">
    <citation type="journal article" date="1977" name="Plant Physiol.">
        <title>Pigmentation and antibacterial activity of fast neutron- and X-ray-induced strains of Monascus purpureus went.</title>
        <authorList>
            <person name="Wong H.C."/>
            <person name="Bau Y.S."/>
        </authorList>
    </citation>
    <scope>BIOTECHNOLOGY</scope>
</reference>
<reference key="3">
    <citation type="journal article" date="2005" name="Chem. Biodivers.">
        <title>Anti-tumor-initiating effects of monascin, an azaphilonoid pigment from the extract of Monascus pilosus fermented rice (red-mold rice).</title>
        <authorList>
            <person name="Akihisa T."/>
            <person name="Tokuda H."/>
            <person name="Ukiya M."/>
            <person name="Kiyota A."/>
            <person name="Yasukawa K."/>
            <person name="Sakamoto N."/>
            <person name="Kimura Y."/>
            <person name="Suzuki T."/>
            <person name="Takayasu J."/>
            <person name="Nishino H."/>
        </authorList>
    </citation>
    <scope>BIOTECHNOLOGY</scope>
</reference>
<reference key="4">
    <citation type="journal article" date="2006" name="Appl. Microbiol. Biotechnol.">
        <title>In vivo hypolipidemic effects and safety of low dosage Monascus powder in a hamster model of hyperlipidemia.</title>
        <authorList>
            <person name="Lee C.L."/>
            <person name="Tsai T.Y."/>
            <person name="Wang J.J."/>
            <person name="Pan T.M."/>
        </authorList>
    </citation>
    <scope>BIOTECHNOLOGY</scope>
</reference>
<reference key="5">
    <citation type="journal article" date="2010" name="J. Agric. Food Chem.">
        <title>Monascin and ankaflavin act as novel hypolipidemic and high-density lipoprotein cholesterol-raising agents in red mold dioscorea.</title>
        <authorList>
            <person name="Lee C.L."/>
            <person name="Kung Y.H."/>
            <person name="Wu C.L."/>
            <person name="Hsu Y.W."/>
            <person name="Pan T.M."/>
        </authorList>
    </citation>
    <scope>BIOTECHNOLOGY</scope>
</reference>
<reference key="6">
    <citation type="journal article" date="2012" name="Appl. Microbiol. Biotechnol.">
        <title>Development of Monascus fermentation technology for high hypolipidemic effect.</title>
        <authorList>
            <person name="Lee C.L."/>
            <person name="Pan T.M."/>
        </authorList>
    </citation>
    <scope>BIOTECHNOLOGY</scope>
</reference>
<reference key="7">
    <citation type="journal article" date="2016" name="Appl. Microbiol. Biotechnol.">
        <title>Identification and role analysis of an intermediate produced by a polygenic mutant of Monascus pigments cluster in Monascus ruber M7.</title>
        <authorList>
            <person name="Liu J."/>
            <person name="Zhou Y."/>
            <person name="Yi T."/>
            <person name="Zhao M."/>
            <person name="Xie N."/>
            <person name="Lei M."/>
            <person name="Liu Q."/>
            <person name="Shao Y."/>
            <person name="Chen F."/>
        </authorList>
    </citation>
    <scope>FUNCTION</scope>
    <scope>DISRUPTION PHENOTYPE</scope>
    <scope>PATHWAY</scope>
</reference>
<reference key="8">
    <citation type="journal article" date="2017" name="Chem. Sci.">
        <title>Orange, red, yellow: biosynthesis of azaphilone pigments in Monascus fungi.</title>
        <authorList>
            <person name="Chen W."/>
            <person name="Chen R."/>
            <person name="Liu Q."/>
            <person name="He Y."/>
            <person name="He K."/>
            <person name="Ding X."/>
            <person name="Kang L."/>
            <person name="Guo X."/>
            <person name="Xie N."/>
            <person name="Zhou Y."/>
            <person name="Lu Y."/>
            <person name="Cox R.J."/>
            <person name="Molnar I."/>
            <person name="Li M."/>
            <person name="Shao Y."/>
            <person name="Chen F."/>
        </authorList>
    </citation>
    <scope>FUNCTION</scope>
    <scope>DISRUPTION PHENOTYPE</scope>
    <scope>CATALYTIC ACTIVITY</scope>
    <scope>DOMAIN</scope>
    <scope>PATHWAY</scope>
</reference>
<reference key="9">
    <citation type="journal article" date="2021" name="Front. Microbiol.">
        <title>An integrated approach to determine the boundaries of the azaphilone pigment biosynthetic gene cluster of Monascus ruber M7 gown on potato dextrose agar.</title>
        <authorList>
            <person name="Liu Q."/>
            <person name="Zhong S."/>
            <person name="Wang X."/>
            <person name="Gao S."/>
            <person name="Yang X."/>
            <person name="Chen F."/>
            <person name="Molnar I."/>
        </authorList>
    </citation>
    <scope>FUNCTION</scope>
    <scope>DISRUPTION PHENOTYPE</scope>
    <scope>INDUCTION</scope>
    <scope>PATHWAY</scope>
</reference>
<reference key="10">
    <citation type="journal article" date="2022" name="Appl. Biochem. Biotechnol.">
        <title>Inactivation of MrSir2 in Monascus ruber Influenced the Developmental Process and the Production of Monascus Azaphilone Pigments.</title>
        <authorList>
            <person name="Zhang J."/>
            <person name="Yang Y."/>
            <person name="Mao Z."/>
            <person name="Yan Q."/>
            <person name="Chen Q."/>
            <person name="Yi M."/>
            <person name="Shao Y."/>
        </authorList>
    </citation>
    <scope>INDUCTION</scope>
</reference>
<reference key="11">
    <citation type="journal article" date="2023" name="Food Res. Intern.">
        <title>Improved natural food colorant production in the filamentous fungus Monascus ruber using CRISPR-based engineering.</title>
        <authorList>
            <person name="Ree Yoon H."/>
            <person name="Han S."/>
            <person name="Chul Shin S."/>
            <person name="Cheong Yeom S."/>
            <person name="Jin Kim H."/>
        </authorList>
    </citation>
    <scope>BIOTECHNOLOGY</scope>
</reference>
<keyword id="KW-0012">Acyltransferase</keyword>
<keyword id="KW-0489">Methyltransferase</keyword>
<keyword id="KW-0511">Multifunctional enzyme</keyword>
<keyword id="KW-0521">NADP</keyword>
<keyword id="KW-0596">Phosphopantetheine</keyword>
<keyword id="KW-0597">Phosphoprotein</keyword>
<keyword id="KW-0608">Pigment</keyword>
<keyword id="KW-0677">Repeat</keyword>
<keyword id="KW-0808">Transferase</keyword>
<name>PIGA_MONRU</name>
<accession>A0A0S2CHA9</accession>
<organism>
    <name type="scientific">Monascus ruber</name>
    <name type="common">Mold</name>
    <dbReference type="NCBI Taxonomy" id="89489"/>
    <lineage>
        <taxon>Eukaryota</taxon>
        <taxon>Fungi</taxon>
        <taxon>Dikarya</taxon>
        <taxon>Ascomycota</taxon>
        <taxon>Pezizomycotina</taxon>
        <taxon>Eurotiomycetes</taxon>
        <taxon>Eurotiomycetidae</taxon>
        <taxon>Eurotiales</taxon>
        <taxon>Aspergillaceae</taxon>
        <taxon>Monascus</taxon>
    </lineage>
</organism>
<protein>
    <recommendedName>
        <fullName evidence="17">Non-reducing polyketide synthase pigA</fullName>
        <shortName evidence="17">nrPKS pigA</shortName>
        <ecNumber evidence="13">2.3.1.-</ecNumber>
    </recommendedName>
    <alternativeName>
        <fullName evidence="17">Azaphilone pigments biosynthesis cluster protein A</fullName>
    </alternativeName>
</protein>
<feature type="chain" id="PRO_0000460202" description="Non-reducing polyketide synthase pigA">
    <location>
        <begin position="1"/>
        <end position="2690"/>
    </location>
</feature>
<feature type="domain" description="Starter acyltransferase (SAT)" evidence="2 18">
    <location>
        <begin position="96"/>
        <end position="211"/>
    </location>
</feature>
<feature type="domain" description="Ketosynthase family 3 (KS3)" evidence="4 18">
    <location>
        <begin position="388"/>
        <end position="804"/>
    </location>
</feature>
<feature type="domain" description="Malonyl-CoA:ACP transacylase (MAT)" evidence="2 18">
    <location>
        <begin position="915"/>
        <end position="1182"/>
    </location>
</feature>
<feature type="domain" description="PKS/mFAS DH" evidence="5 18">
    <location>
        <begin position="1296"/>
        <end position="1602"/>
    </location>
</feature>
<feature type="domain" description="Carrier 1" evidence="3 18">
    <location>
        <begin position="1657"/>
        <end position="1731"/>
    </location>
</feature>
<feature type="domain" description="Carrier 2" evidence="3 18">
    <location>
        <begin position="1768"/>
        <end position="1842"/>
    </location>
</feature>
<feature type="domain" description="Thioester reductase (TE)" evidence="2 18">
    <location>
        <begin position="2320"/>
        <end position="2564"/>
    </location>
</feature>
<feature type="region of interest" description="N-terminal hotdog fold" evidence="5">
    <location>
        <begin position="1296"/>
        <end position="1426"/>
    </location>
</feature>
<feature type="region of interest" description="Product template (PT) domain" evidence="2 18">
    <location>
        <begin position="1323"/>
        <end position="1600"/>
    </location>
</feature>
<feature type="region of interest" description="C-terminal hotdog fold" evidence="5">
    <location>
        <begin position="1454"/>
        <end position="1602"/>
    </location>
</feature>
<feature type="region of interest" description="Disordered" evidence="6">
    <location>
        <begin position="1731"/>
        <end position="1764"/>
    </location>
</feature>
<feature type="region of interest" description="Methyltransferase domain" evidence="2 18">
    <location>
        <begin position="1948"/>
        <end position="2255"/>
    </location>
</feature>
<feature type="compositionally biased region" description="Acidic residues" evidence="6">
    <location>
        <begin position="1736"/>
        <end position="1751"/>
    </location>
</feature>
<feature type="compositionally biased region" description="Polar residues" evidence="6">
    <location>
        <begin position="1755"/>
        <end position="1764"/>
    </location>
</feature>
<feature type="active site" description="Nucleophile; for transacylase activity" evidence="1">
    <location>
        <position position="140"/>
    </location>
</feature>
<feature type="active site" description="Proton donor/acceptor; for transacylase activity" evidence="1">
    <location>
        <position position="258"/>
    </location>
</feature>
<feature type="active site" description="For beta-ketoacyl synthase activity" evidence="4">
    <location>
        <position position="553"/>
    </location>
</feature>
<feature type="active site" description="For beta-ketoacyl synthase activity" evidence="4">
    <location>
        <position position="688"/>
    </location>
</feature>
<feature type="active site" description="For beta-ketoacyl synthase activity" evidence="4">
    <location>
        <position position="727"/>
    </location>
</feature>
<feature type="active site" description="Proton acceptor; for dehydratase activity" evidence="5">
    <location>
        <position position="1327"/>
    </location>
</feature>
<feature type="active site" description="Proton donor; for dehydratase activity" evidence="5">
    <location>
        <position position="1510"/>
    </location>
</feature>
<feature type="modified residue" description="O-(pantetheine 4'-phosphoryl)serine" evidence="3">
    <location>
        <position position="1691"/>
    </location>
</feature>
<feature type="modified residue" description="O-(pantetheine 4'-phosphoryl)serine" evidence="3">
    <location>
        <position position="1802"/>
    </location>
</feature>
<sequence>MVSRILRPVTGSTVLLFGPQALSFTKEDFDQIRTTVLETQGFSWIVDAVAGLPEHWKALAERIPKLQSILGEQLLENLKDWFTTGQVNEADFHLPNILLSPLVVITQLAQYCQYLELSQADDQSDAHAIQNDNIEALGFCTGLLSAVAVACSTNRRQFQEYGAVAIRLAMLVGAAADAEDALSDYGASKSMAIAWNAPEAGAELSRVLQDFPEAYVSVWYDANRATVTTAAKTVPALQQKLRSAGIIATEVGLRGRFHCDCYGNDIDSMIDFCDSHPAFQFPDASELVLQTRSNAGGDLITKGNLHQHALRLILLERSQWYQTFSTMHAARLQHKDSVLVSFGPERCIPPSLLRGLSAQVVNMADLAVRNMRVPGATSALKYAHAVDENDIAVIGMSCKVAGADDLEGFWDLLCRGESQHQEVPKERFTFDTIFRELDTKRKWFGNFIRDHDAFDHKFFKKSPREIASTDPQQRHMLQIAYQAVEQSGYFCNPSVDKQIGCYIGVCAADYENNIACHAPNAFSATGNLKSFIAGKISHYFGWTGPGLTIDTACSSSAVAVHQACKAILSGECTAALAGGTNVMTNPLWFQNLAGASFLSPTGQCKPFDAHADGYCRGEGIAAVFLKKLSTAIEDGDQILGTIASTAVYQNQNCTPIFVPNSPSLSELFKDVTREAHLVPKQITVVEAHGTGTPVGDPAEYESILRVLGGPNRSTPLHFGSVKGLIGHTECTSGVISLIKVLLMINEGYIPPQASFTTMNPSIKALPEHNMKIATKLTPWNEDFRAALINNYGASGSNASLIVTQAPSARDPATIQVLEGARYPFWFPGPDDRSLRSYASRFLRFIQSKTVSAKNFSPRNLAFNLSRQSNRTFGRAAIFNCASMGELEQKLTALGNGNSSVAPTVRPATRPVVLCFGGQISTFVGLDRQLYDNVVILRSYLDRCDAVCRALKAGSIYPAIFERNPISDPVKLQTSLFAIQYSCAKSWIDCGVQPVALVGHSFGELTAVCISGILGLEDALKMIIGRASLIRDSWGAEKGSMMAVEADLPVVEKLLGESEKLCKDDKPATIACFNGPRSFTLAGSSLAIDAVLQTVSGNSSFSSVRTKKLNVTNAFHSTLVEPLVVDLERTATGLKFGESIIHLERATESHSDEKLTPKYVASHMRDPVYFNHAVQRLAKQHPSCIWLEAGCNSTIINMLGRALGASADHHFQPVNLSSDHGLDSLSDTTVSLWRAGLNVSFWPHHSSQTYEYANLLLPPYQFEKARHWVELKPPPKLTAEPVTQPASPVEELPKGLLTFVGYQDKDQRTARFRINTMVPKYEELVSGHLIAQTAPICPATLEVDLAIEALYSLRPDLVKSTLQPQIHHVDNQAPICVNPERMVWLQLEAFDAERHSWNWKIESTGSQKASATTLHVTGKVFFRSVDDLQFQLDFARYERLVGYQRCLGILNCLDADDIIQGRNIYKTFAEIVDYGEMYRGLQKLVGQGNESAGRIVKKYSGETWLDTHLSDCFSQVGGIWVNCMTDRAPTDMYIANGFEQWLRSPKISCDYERPEIWDVYAYHHRSSDKAYLTDIFIFDSTNGLLTEVILGINYAKVPKMSMSKLLSRLTADGARQSHHAAPVSAPAKLAAPAAVPGPVSAVKVKKASKPKKKQFSAPDISGKVRAMLAELAGLEPEEIKDDTELANIGIDSLMGMELAREIEGIFKCSLPTDELVEVTNFQGLLRCIQEALGPSEGVEEETDNEEGEDGESSENPSVFTPSDAATSVSSAKADVAEFLAEFLGIEESDIAPATLLRDLGVDSLLSTELRSEIASKFDVHIDEEVVLEELSVGEFDVKVNGKSEGTPRSSAASTMPAKIIEGSVKVNASHPTVNSTLHTSSNGELSLPVSTVLEAFGETKALTDQFISDYHCANYMDTILPKQDQLCVALVIEAFEQLGCSLRNAKSGQTLERIKYLPQHERLVEYLYMMLEKGARLVDMDDDRITRTAVTVPSKSSSEICQELMRDYPGHNFANQLTQFCGTRLADVLTGKLDGIKLIFGSEEGRTLVSGLYGDSLLNKLAYKQMEDFLKRLISKLPMHEGPLKILEMGAGTGGTTKWIVPMLASLNVPIEYTFTDLAPSFVAAARKKFKQYPFMKFRVHDIEKAPADDLVGTQHIILASNAVHATHSLTVSTSHIHKALRQDGFLMMLEMTETVYWIDIIFGLLEGWWLFDDGRRHAISHQSRWERDLNTAGFGHVDWTDGHRSEVNIQRIFLALASGQRYERQPVTPSSAAKAPLTDFAARQAAVLKYVRNSTQGFVAPTTSSTSQPEPSPPGKCVLVTGATGSLGSHLVSHFAQLNDVTSVVCINRVSREDPTRRQQQSMESKGISLSHTALSKLIILETDTSKPMLGLPAEQYRHLVNNVTHVLHNAWPMSGKRPVKGFELQFQVMKNLITLAWDISCRRGPDFKVRFQLISSISVVGYYPLRTGNRHVPEERVCIEDLLPNGYSDAKYVCELMLDETLHQYPDRFSPMAVRLGQVAGSKTSGYWNPMEHLSFLVKSSQTLKALPDFEGELSWTPVNDVAGTLADLLLADNTPYPIYHIDNPVRQPWREMIPILADGLDIPKGNVIPFPEWVQRVRRFPGSVELDNPAAKLIDFLDDNFLRMSCGGLLLDTTKSREHSPTLADVGPVSAEVVRKYIQAWKEMGFLH</sequence>